<reference key="1">
    <citation type="submission" date="2008-02" db="EMBL/GenBank/DDBJ databases">
        <title>Complete sequence of Haemophilus somnus 2336.</title>
        <authorList>
            <consortium name="US DOE Joint Genome Institute"/>
            <person name="Siddaramappa S."/>
            <person name="Duncan A.J."/>
            <person name="Challacombe J.F."/>
            <person name="Rainey D."/>
            <person name="Gillaspy A.F."/>
            <person name="Carson M."/>
            <person name="Gipson J."/>
            <person name="Gipson M."/>
            <person name="Bruce D."/>
            <person name="Detter J.C."/>
            <person name="Han C.S."/>
            <person name="Land M."/>
            <person name="Tapia R."/>
            <person name="Thompson L.S."/>
            <person name="Orvis J."/>
            <person name="Zaitshik J."/>
            <person name="Barnes G."/>
            <person name="Brettin T.S."/>
            <person name="Dyer D.W."/>
            <person name="Inzana T.J."/>
        </authorList>
    </citation>
    <scope>NUCLEOTIDE SEQUENCE [LARGE SCALE GENOMIC DNA]</scope>
    <source>
        <strain>2336</strain>
    </source>
</reference>
<proteinExistence type="inferred from homology"/>
<evidence type="ECO:0000255" key="1">
    <source>
        <dbReference type="HAMAP-Rule" id="MF_00113"/>
    </source>
</evidence>
<name>QUEA_HISS2</name>
<organism>
    <name type="scientific">Histophilus somni (strain 2336)</name>
    <name type="common">Haemophilus somnus</name>
    <dbReference type="NCBI Taxonomy" id="228400"/>
    <lineage>
        <taxon>Bacteria</taxon>
        <taxon>Pseudomonadati</taxon>
        <taxon>Pseudomonadota</taxon>
        <taxon>Gammaproteobacteria</taxon>
        <taxon>Pasteurellales</taxon>
        <taxon>Pasteurellaceae</taxon>
        <taxon>Histophilus</taxon>
    </lineage>
</organism>
<protein>
    <recommendedName>
        <fullName evidence="1">S-adenosylmethionine:tRNA ribosyltransferase-isomerase</fullName>
        <ecNumber evidence="1">2.4.99.17</ecNumber>
    </recommendedName>
    <alternativeName>
        <fullName evidence="1">Queuosine biosynthesis protein QueA</fullName>
    </alternativeName>
</protein>
<accession>B0UWJ9</accession>
<dbReference type="EC" id="2.4.99.17" evidence="1"/>
<dbReference type="EMBL" id="CP000947">
    <property type="protein sequence ID" value="ACA31934.1"/>
    <property type="molecule type" value="Genomic_DNA"/>
</dbReference>
<dbReference type="RefSeq" id="WP_011609470.1">
    <property type="nucleotide sequence ID" value="NC_010519.1"/>
</dbReference>
<dbReference type="SMR" id="B0UWJ9"/>
<dbReference type="STRING" id="228400.HSM_0301"/>
<dbReference type="GeneID" id="31486581"/>
<dbReference type="KEGG" id="hsm:HSM_0301"/>
<dbReference type="HOGENOM" id="CLU_039110_1_0_6"/>
<dbReference type="UniPathway" id="UPA00392"/>
<dbReference type="GO" id="GO:0005737">
    <property type="term" value="C:cytoplasm"/>
    <property type="evidence" value="ECO:0007669"/>
    <property type="project" value="UniProtKB-SubCell"/>
</dbReference>
<dbReference type="GO" id="GO:0051075">
    <property type="term" value="F:S-adenosylmethionine:tRNA ribosyltransferase-isomerase activity"/>
    <property type="evidence" value="ECO:0007669"/>
    <property type="project" value="UniProtKB-EC"/>
</dbReference>
<dbReference type="GO" id="GO:0008616">
    <property type="term" value="P:queuosine biosynthetic process"/>
    <property type="evidence" value="ECO:0007669"/>
    <property type="project" value="UniProtKB-UniRule"/>
</dbReference>
<dbReference type="GO" id="GO:0002099">
    <property type="term" value="P:tRNA wobble guanine modification"/>
    <property type="evidence" value="ECO:0007669"/>
    <property type="project" value="TreeGrafter"/>
</dbReference>
<dbReference type="FunFam" id="2.40.10.240:FF:000001">
    <property type="entry name" value="S-adenosylmethionine:tRNA ribosyltransferase-isomerase"/>
    <property type="match status" value="1"/>
</dbReference>
<dbReference type="FunFam" id="3.40.1780.10:FF:000001">
    <property type="entry name" value="S-adenosylmethionine:tRNA ribosyltransferase-isomerase"/>
    <property type="match status" value="1"/>
</dbReference>
<dbReference type="Gene3D" id="2.40.10.240">
    <property type="entry name" value="QueA-like"/>
    <property type="match status" value="1"/>
</dbReference>
<dbReference type="Gene3D" id="3.40.1780.10">
    <property type="entry name" value="QueA-like"/>
    <property type="match status" value="1"/>
</dbReference>
<dbReference type="HAMAP" id="MF_00113">
    <property type="entry name" value="QueA"/>
    <property type="match status" value="1"/>
</dbReference>
<dbReference type="InterPro" id="IPR003699">
    <property type="entry name" value="QueA"/>
</dbReference>
<dbReference type="InterPro" id="IPR042118">
    <property type="entry name" value="QueA_dom1"/>
</dbReference>
<dbReference type="InterPro" id="IPR042119">
    <property type="entry name" value="QueA_dom2"/>
</dbReference>
<dbReference type="InterPro" id="IPR036100">
    <property type="entry name" value="QueA_sf"/>
</dbReference>
<dbReference type="NCBIfam" id="NF001140">
    <property type="entry name" value="PRK00147.1"/>
    <property type="match status" value="1"/>
</dbReference>
<dbReference type="NCBIfam" id="TIGR00113">
    <property type="entry name" value="queA"/>
    <property type="match status" value="1"/>
</dbReference>
<dbReference type="PANTHER" id="PTHR30307">
    <property type="entry name" value="S-ADENOSYLMETHIONINE:TRNA RIBOSYLTRANSFERASE-ISOMERASE"/>
    <property type="match status" value="1"/>
</dbReference>
<dbReference type="PANTHER" id="PTHR30307:SF0">
    <property type="entry name" value="S-ADENOSYLMETHIONINE:TRNA RIBOSYLTRANSFERASE-ISOMERASE"/>
    <property type="match status" value="1"/>
</dbReference>
<dbReference type="Pfam" id="PF02547">
    <property type="entry name" value="Queuosine_synth"/>
    <property type="match status" value="1"/>
</dbReference>
<dbReference type="SUPFAM" id="SSF111337">
    <property type="entry name" value="QueA-like"/>
    <property type="match status" value="1"/>
</dbReference>
<keyword id="KW-0963">Cytoplasm</keyword>
<keyword id="KW-0671">Queuosine biosynthesis</keyword>
<keyword id="KW-0949">S-adenosyl-L-methionine</keyword>
<keyword id="KW-0808">Transferase</keyword>
<feature type="chain" id="PRO_1000076008" description="S-adenosylmethionine:tRNA ribosyltransferase-isomerase">
    <location>
        <begin position="1"/>
        <end position="356"/>
    </location>
</feature>
<gene>
    <name evidence="1" type="primary">queA</name>
    <name type="ordered locus">HSM_0301</name>
</gene>
<sequence length="356" mass="40226">MYLSDFYFDLPDELIARYPKRERSSSRMLQLNGQNGELFHRTFSDVADLINEGDLLIFNNTRVIPARMFGRKASGGKIEVLVERVLNEHHFLAHIRSSKSPKENTVLFLGEDKLGEGKGVEMLMKARHENLFELELSDKSTALLDILQKIGHMPLPPYIDRPDEDADKERYQTVYNKVPGAVAAPTAGLHFDDELLTQLKNKGVNFAFVTLHVGAGTFQPVRVENIEDHKMHAEYVEVPQEVVDAVLATKAKGKRVIAVGTTSVRSIESAALFAEENNSTHLLEPYFSDTSIFIYPGKKFRVIDCLITNFHLPESTLIMLVSAFAGYQHTMNAYKSAVENRYRFFSYGDAMFITKA</sequence>
<comment type="function">
    <text evidence="1">Transfers and isomerizes the ribose moiety from AdoMet to the 7-aminomethyl group of 7-deazaguanine (preQ1-tRNA) to give epoxyqueuosine (oQ-tRNA).</text>
</comment>
<comment type="catalytic activity">
    <reaction evidence="1">
        <text>7-aminomethyl-7-carbaguanosine(34) in tRNA + S-adenosyl-L-methionine = epoxyqueuosine(34) in tRNA + adenine + L-methionine + 2 H(+)</text>
        <dbReference type="Rhea" id="RHEA:32155"/>
        <dbReference type="Rhea" id="RHEA-COMP:10342"/>
        <dbReference type="Rhea" id="RHEA-COMP:18582"/>
        <dbReference type="ChEBI" id="CHEBI:15378"/>
        <dbReference type="ChEBI" id="CHEBI:16708"/>
        <dbReference type="ChEBI" id="CHEBI:57844"/>
        <dbReference type="ChEBI" id="CHEBI:59789"/>
        <dbReference type="ChEBI" id="CHEBI:82833"/>
        <dbReference type="ChEBI" id="CHEBI:194443"/>
        <dbReference type="EC" id="2.4.99.17"/>
    </reaction>
</comment>
<comment type="pathway">
    <text evidence="1">tRNA modification; tRNA-queuosine biosynthesis.</text>
</comment>
<comment type="subunit">
    <text evidence="1">Monomer.</text>
</comment>
<comment type="subcellular location">
    <subcellularLocation>
        <location evidence="1">Cytoplasm</location>
    </subcellularLocation>
</comment>
<comment type="similarity">
    <text evidence="1">Belongs to the QueA family.</text>
</comment>